<keyword id="KW-0067">ATP-binding</keyword>
<keyword id="KW-1003">Cell membrane</keyword>
<keyword id="KW-0472">Membrane</keyword>
<keyword id="KW-0547">Nucleotide-binding</keyword>
<keyword id="KW-1185">Reference proteome</keyword>
<keyword id="KW-1278">Translocase</keyword>
<keyword id="KW-0813">Transport</keyword>
<evidence type="ECO:0000255" key="1">
    <source>
        <dbReference type="HAMAP-Rule" id="MF_01710"/>
    </source>
</evidence>
<dbReference type="EC" id="7.-.-.-" evidence="1"/>
<dbReference type="EMBL" id="AE000666">
    <property type="protein sequence ID" value="AAB86176.1"/>
    <property type="molecule type" value="Genomic_DNA"/>
</dbReference>
<dbReference type="PIR" id="A69095">
    <property type="entry name" value="A69095"/>
</dbReference>
<dbReference type="RefSeq" id="WP_010877312.1">
    <property type="nucleotide sequence ID" value="NC_000916.1"/>
</dbReference>
<dbReference type="SMR" id="O27739"/>
<dbReference type="STRING" id="187420.MTH_1704"/>
<dbReference type="PaxDb" id="187420-MTH_1704"/>
<dbReference type="EnsemblBacteria" id="AAB86176">
    <property type="protein sequence ID" value="AAB86176"/>
    <property type="gene ID" value="MTH_1704"/>
</dbReference>
<dbReference type="GeneID" id="1470789"/>
<dbReference type="KEGG" id="mth:MTH_1704"/>
<dbReference type="PATRIC" id="fig|187420.15.peg.1665"/>
<dbReference type="HOGENOM" id="CLU_000604_1_22_2"/>
<dbReference type="InParanoid" id="O27739"/>
<dbReference type="Proteomes" id="UP000005223">
    <property type="component" value="Chromosome"/>
</dbReference>
<dbReference type="GO" id="GO:0043190">
    <property type="term" value="C:ATP-binding cassette (ABC) transporter complex"/>
    <property type="evidence" value="ECO:0007669"/>
    <property type="project" value="TreeGrafter"/>
</dbReference>
<dbReference type="GO" id="GO:0005524">
    <property type="term" value="F:ATP binding"/>
    <property type="evidence" value="ECO:0007669"/>
    <property type="project" value="UniProtKB-KW"/>
</dbReference>
<dbReference type="GO" id="GO:0016887">
    <property type="term" value="F:ATP hydrolysis activity"/>
    <property type="evidence" value="ECO:0007669"/>
    <property type="project" value="InterPro"/>
</dbReference>
<dbReference type="GO" id="GO:0042626">
    <property type="term" value="F:ATPase-coupled transmembrane transporter activity"/>
    <property type="evidence" value="ECO:0007669"/>
    <property type="project" value="TreeGrafter"/>
</dbReference>
<dbReference type="GO" id="GO:0006824">
    <property type="term" value="P:cobalt ion transport"/>
    <property type="evidence" value="ECO:0007669"/>
    <property type="project" value="InterPro"/>
</dbReference>
<dbReference type="CDD" id="cd03225">
    <property type="entry name" value="ABC_cobalt_CbiO_domain1"/>
    <property type="match status" value="1"/>
</dbReference>
<dbReference type="FunFam" id="3.40.50.300:FF:000224">
    <property type="entry name" value="Energy-coupling factor transporter ATP-binding protein EcfA"/>
    <property type="match status" value="1"/>
</dbReference>
<dbReference type="Gene3D" id="3.40.50.300">
    <property type="entry name" value="P-loop containing nucleotide triphosphate hydrolases"/>
    <property type="match status" value="1"/>
</dbReference>
<dbReference type="InterPro" id="IPR003593">
    <property type="entry name" value="AAA+_ATPase"/>
</dbReference>
<dbReference type="InterPro" id="IPR003439">
    <property type="entry name" value="ABC_transporter-like_ATP-bd"/>
</dbReference>
<dbReference type="InterPro" id="IPR017871">
    <property type="entry name" value="ABC_transporter-like_CS"/>
</dbReference>
<dbReference type="InterPro" id="IPR015856">
    <property type="entry name" value="ABC_transpr_CbiO/EcfA_su"/>
</dbReference>
<dbReference type="InterPro" id="IPR005876">
    <property type="entry name" value="Co_trans_ATP-bd"/>
</dbReference>
<dbReference type="InterPro" id="IPR050095">
    <property type="entry name" value="ECF_ABC_transporter_ATP-bd"/>
</dbReference>
<dbReference type="InterPro" id="IPR027417">
    <property type="entry name" value="P-loop_NTPase"/>
</dbReference>
<dbReference type="NCBIfam" id="TIGR01166">
    <property type="entry name" value="cbiO"/>
    <property type="match status" value="1"/>
</dbReference>
<dbReference type="PANTHER" id="PTHR43553:SF24">
    <property type="entry name" value="ENERGY-COUPLING FACTOR TRANSPORTER ATP-BINDING PROTEIN ECFA1"/>
    <property type="match status" value="1"/>
</dbReference>
<dbReference type="PANTHER" id="PTHR43553">
    <property type="entry name" value="HEAVY METAL TRANSPORTER"/>
    <property type="match status" value="1"/>
</dbReference>
<dbReference type="Pfam" id="PF00005">
    <property type="entry name" value="ABC_tran"/>
    <property type="match status" value="1"/>
</dbReference>
<dbReference type="SMART" id="SM00382">
    <property type="entry name" value="AAA"/>
    <property type="match status" value="1"/>
</dbReference>
<dbReference type="SUPFAM" id="SSF52540">
    <property type="entry name" value="P-loop containing nucleoside triphosphate hydrolases"/>
    <property type="match status" value="1"/>
</dbReference>
<dbReference type="PROSITE" id="PS00211">
    <property type="entry name" value="ABC_TRANSPORTER_1"/>
    <property type="match status" value="1"/>
</dbReference>
<dbReference type="PROSITE" id="PS50893">
    <property type="entry name" value="ABC_TRANSPORTER_2"/>
    <property type="match status" value="1"/>
</dbReference>
<dbReference type="PROSITE" id="PS51246">
    <property type="entry name" value="CBIO"/>
    <property type="match status" value="1"/>
</dbReference>
<protein>
    <recommendedName>
        <fullName evidence="1">Energy-coupling factor transporter ATP-binding protein EcfA</fullName>
        <shortName evidence="1">ECF transporter A component EcfA</shortName>
        <ecNumber evidence="1">7.-.-.-</ecNumber>
    </recommendedName>
</protein>
<feature type="chain" id="PRO_0000092153" description="Energy-coupling factor transporter ATP-binding protein EcfA">
    <location>
        <begin position="1"/>
        <end position="311"/>
    </location>
</feature>
<feature type="domain" description="ABC transporter" evidence="1">
    <location>
        <begin position="2"/>
        <end position="237"/>
    </location>
</feature>
<feature type="binding site" evidence="1">
    <location>
        <begin position="35"/>
        <end position="42"/>
    </location>
    <ligand>
        <name>ATP</name>
        <dbReference type="ChEBI" id="CHEBI:30616"/>
    </ligand>
</feature>
<proteinExistence type="inferred from homology"/>
<name>ECFA_METTH</name>
<organism>
    <name type="scientific">Methanothermobacter thermautotrophicus (strain ATCC 29096 / DSM 1053 / JCM 10044 / NBRC 100330 / Delta H)</name>
    <name type="common">Methanobacterium thermoautotrophicum</name>
    <dbReference type="NCBI Taxonomy" id="187420"/>
    <lineage>
        <taxon>Archaea</taxon>
        <taxon>Methanobacteriati</taxon>
        <taxon>Methanobacteriota</taxon>
        <taxon>Methanomada group</taxon>
        <taxon>Methanobacteria</taxon>
        <taxon>Methanobacteriales</taxon>
        <taxon>Methanobacteriaceae</taxon>
        <taxon>Methanothermobacter</taxon>
    </lineage>
</organism>
<gene>
    <name evidence="1" type="primary">ecfA</name>
    <name type="synonym">cbiO</name>
    <name type="ordered locus">MTH_1704</name>
</gene>
<comment type="function">
    <text evidence="1">ATP-binding (A) component of a common energy-coupling factor (ECF) ABC-transporter complex. Unlike classic ABC transporters this ECF transporter provides the energy necessary to transport a number of different substrates.</text>
</comment>
<comment type="subunit">
    <text evidence="1">Forms a stable energy-coupling factor (ECF) transporter complex composed of 2 membrane-embedded substrate-binding proteins (S component), 2 ATP-binding proteins (A component) and 2 transmembrane proteins (T component).</text>
</comment>
<comment type="subcellular location">
    <subcellularLocation>
        <location evidence="1">Cell membrane</location>
        <topology evidence="1">Peripheral membrane protein</topology>
    </subcellularLocation>
</comment>
<comment type="similarity">
    <text evidence="1">Belongs to the ABC transporter superfamily. Energy-coupling factor EcfA family.</text>
</comment>
<sequence>MIELRDLSYSYPDGTPALRGINMKVERGERVAVIGPNGAGKSTLFLHLNGILKPAAGEVIIDGERVDYSKDELIKIRQKVGIVFQNPDDQLFSPTVREDVAFGPMNLGLPEDEVEERVAESLEKVGMSGYENRAPHHLSGGEKKRVAIAGILAMKPEIMVLDEPTTGLDPETADGIIRILLELSREGITVMISSHDVEIISQFAERVFVLNSGELIAEGTPLEIFRDAELIRRASLRLPRTADLLNRLRMAGFEVDVKLTVEETYHELLHLLGGDAYHRLLHFLGEEKQHRLIHLLGEKKYHELLHALKEQ</sequence>
<accession>O27739</accession>
<reference key="1">
    <citation type="journal article" date="1997" name="J. Bacteriol.">
        <title>Complete genome sequence of Methanobacterium thermoautotrophicum deltaH: functional analysis and comparative genomics.</title>
        <authorList>
            <person name="Smith D.R."/>
            <person name="Doucette-Stamm L.A."/>
            <person name="Deloughery C."/>
            <person name="Lee H.-M."/>
            <person name="Dubois J."/>
            <person name="Aldredge T."/>
            <person name="Bashirzadeh R."/>
            <person name="Blakely D."/>
            <person name="Cook R."/>
            <person name="Gilbert K."/>
            <person name="Harrison D."/>
            <person name="Hoang L."/>
            <person name="Keagle P."/>
            <person name="Lumm W."/>
            <person name="Pothier B."/>
            <person name="Qiu D."/>
            <person name="Spadafora R."/>
            <person name="Vicare R."/>
            <person name="Wang Y."/>
            <person name="Wierzbowski J."/>
            <person name="Gibson R."/>
            <person name="Jiwani N."/>
            <person name="Caruso A."/>
            <person name="Bush D."/>
            <person name="Safer H."/>
            <person name="Patwell D."/>
            <person name="Prabhakar S."/>
            <person name="McDougall S."/>
            <person name="Shimer G."/>
            <person name="Goyal A."/>
            <person name="Pietrovski S."/>
            <person name="Church G.M."/>
            <person name="Daniels C.J."/>
            <person name="Mao J.-I."/>
            <person name="Rice P."/>
            <person name="Noelling J."/>
            <person name="Reeve J.N."/>
        </authorList>
    </citation>
    <scope>NUCLEOTIDE SEQUENCE [LARGE SCALE GENOMIC DNA]</scope>
    <source>
        <strain>ATCC 29096 / DSM 1053 / JCM 10044 / NBRC 100330 / Delta H</strain>
    </source>
</reference>